<reference key="1">
    <citation type="journal article" date="2009" name="PLoS ONE">
        <title>The complete genome of Teredinibacter turnerae T7901: an intracellular endosymbiont of marine wood-boring bivalves (shipworms).</title>
        <authorList>
            <person name="Yang J.C."/>
            <person name="Madupu R."/>
            <person name="Durkin A.S."/>
            <person name="Ekborg N.A."/>
            <person name="Pedamallu C.S."/>
            <person name="Hostetler J.B."/>
            <person name="Radune D."/>
            <person name="Toms B.S."/>
            <person name="Henrissat B."/>
            <person name="Coutinho P.M."/>
            <person name="Schwarz S."/>
            <person name="Field L."/>
            <person name="Trindade-Silva A.E."/>
            <person name="Soares C.A.G."/>
            <person name="Elshahawi S."/>
            <person name="Hanora A."/>
            <person name="Schmidt E.W."/>
            <person name="Haygood M.G."/>
            <person name="Posfai J."/>
            <person name="Benner J."/>
            <person name="Madinger C."/>
            <person name="Nove J."/>
            <person name="Anton B."/>
            <person name="Chaudhary K."/>
            <person name="Foster J."/>
            <person name="Holman A."/>
            <person name="Kumar S."/>
            <person name="Lessard P.A."/>
            <person name="Luyten Y.A."/>
            <person name="Slatko B."/>
            <person name="Wood N."/>
            <person name="Wu B."/>
            <person name="Teplitski M."/>
            <person name="Mougous J.D."/>
            <person name="Ward N."/>
            <person name="Eisen J.A."/>
            <person name="Badger J.H."/>
            <person name="Distel D.L."/>
        </authorList>
    </citation>
    <scope>NUCLEOTIDE SEQUENCE [LARGE SCALE GENOMIC DNA]</scope>
    <source>
        <strain>ATCC 39867 / T7901</strain>
    </source>
</reference>
<comment type="function">
    <text evidence="1">One of several proteins that assist in the late maturation steps of the functional core of the 30S ribosomal subunit. Associates with free 30S ribosomal subunits (but not with 30S subunits that are part of 70S ribosomes or polysomes). Required for efficient processing of 16S rRNA. May interact with the 5'-terminal helix region of 16S rRNA.</text>
</comment>
<comment type="subunit">
    <text evidence="1">Monomer. Binds 30S ribosomal subunits, but not 50S ribosomal subunits or 70S ribosomes.</text>
</comment>
<comment type="subcellular location">
    <subcellularLocation>
        <location evidence="1">Cytoplasm</location>
    </subcellularLocation>
</comment>
<comment type="similarity">
    <text evidence="1">Belongs to the RbfA family.</text>
</comment>
<sequence>MPKEFNRSDRVADAMQRSLANAIRMEIQDPRVGMVNINAVEVSRDLALAKVFVTFIGVDDERAIETSVSILNKAAGFLRNVVSKDLTIRSTPRIHFYYDKTAVRGQVLSSLIDRAIAEDKSHHQDDAGQEEE</sequence>
<name>RBFA_TERTT</name>
<gene>
    <name evidence="1" type="primary">rbfA</name>
    <name type="ordered locus">TERTU_3216</name>
</gene>
<dbReference type="EMBL" id="CP001614">
    <property type="protein sequence ID" value="ACR12916.1"/>
    <property type="molecule type" value="Genomic_DNA"/>
</dbReference>
<dbReference type="RefSeq" id="WP_015819029.1">
    <property type="nucleotide sequence ID" value="NC_012997.1"/>
</dbReference>
<dbReference type="SMR" id="C5BPV8"/>
<dbReference type="STRING" id="377629.TERTU_3216"/>
<dbReference type="KEGG" id="ttu:TERTU_3216"/>
<dbReference type="eggNOG" id="COG0858">
    <property type="taxonomic scope" value="Bacteria"/>
</dbReference>
<dbReference type="HOGENOM" id="CLU_089475_5_0_6"/>
<dbReference type="OrthoDB" id="307788at2"/>
<dbReference type="Proteomes" id="UP000009080">
    <property type="component" value="Chromosome"/>
</dbReference>
<dbReference type="GO" id="GO:0005829">
    <property type="term" value="C:cytosol"/>
    <property type="evidence" value="ECO:0007669"/>
    <property type="project" value="TreeGrafter"/>
</dbReference>
<dbReference type="GO" id="GO:0043024">
    <property type="term" value="F:ribosomal small subunit binding"/>
    <property type="evidence" value="ECO:0007669"/>
    <property type="project" value="TreeGrafter"/>
</dbReference>
<dbReference type="GO" id="GO:0030490">
    <property type="term" value="P:maturation of SSU-rRNA"/>
    <property type="evidence" value="ECO:0007669"/>
    <property type="project" value="UniProtKB-UniRule"/>
</dbReference>
<dbReference type="Gene3D" id="3.30.300.20">
    <property type="match status" value="1"/>
</dbReference>
<dbReference type="HAMAP" id="MF_00003">
    <property type="entry name" value="RbfA"/>
    <property type="match status" value="1"/>
</dbReference>
<dbReference type="InterPro" id="IPR015946">
    <property type="entry name" value="KH_dom-like_a/b"/>
</dbReference>
<dbReference type="InterPro" id="IPR000238">
    <property type="entry name" value="RbfA"/>
</dbReference>
<dbReference type="InterPro" id="IPR023799">
    <property type="entry name" value="RbfA_dom_sf"/>
</dbReference>
<dbReference type="InterPro" id="IPR020053">
    <property type="entry name" value="Ribosome-bd_factorA_CS"/>
</dbReference>
<dbReference type="NCBIfam" id="TIGR00082">
    <property type="entry name" value="rbfA"/>
    <property type="match status" value="1"/>
</dbReference>
<dbReference type="PANTHER" id="PTHR33515">
    <property type="entry name" value="RIBOSOME-BINDING FACTOR A, CHLOROPLASTIC-RELATED"/>
    <property type="match status" value="1"/>
</dbReference>
<dbReference type="PANTHER" id="PTHR33515:SF1">
    <property type="entry name" value="RIBOSOME-BINDING FACTOR A, CHLOROPLASTIC-RELATED"/>
    <property type="match status" value="1"/>
</dbReference>
<dbReference type="Pfam" id="PF02033">
    <property type="entry name" value="RBFA"/>
    <property type="match status" value="1"/>
</dbReference>
<dbReference type="SUPFAM" id="SSF89919">
    <property type="entry name" value="Ribosome-binding factor A, RbfA"/>
    <property type="match status" value="1"/>
</dbReference>
<dbReference type="PROSITE" id="PS01319">
    <property type="entry name" value="RBFA"/>
    <property type="match status" value="1"/>
</dbReference>
<protein>
    <recommendedName>
        <fullName evidence="1">Ribosome-binding factor A</fullName>
    </recommendedName>
</protein>
<evidence type="ECO:0000255" key="1">
    <source>
        <dbReference type="HAMAP-Rule" id="MF_00003"/>
    </source>
</evidence>
<feature type="chain" id="PRO_1000201655" description="Ribosome-binding factor A">
    <location>
        <begin position="1"/>
        <end position="132"/>
    </location>
</feature>
<keyword id="KW-0963">Cytoplasm</keyword>
<keyword id="KW-1185">Reference proteome</keyword>
<keyword id="KW-0690">Ribosome biogenesis</keyword>
<proteinExistence type="inferred from homology"/>
<accession>C5BPV8</accession>
<organism>
    <name type="scientific">Teredinibacter turnerae (strain ATCC 39867 / T7901)</name>
    <dbReference type="NCBI Taxonomy" id="377629"/>
    <lineage>
        <taxon>Bacteria</taxon>
        <taxon>Pseudomonadati</taxon>
        <taxon>Pseudomonadota</taxon>
        <taxon>Gammaproteobacteria</taxon>
        <taxon>Cellvibrionales</taxon>
        <taxon>Cellvibrionaceae</taxon>
        <taxon>Teredinibacter</taxon>
    </lineage>
</organism>